<gene>
    <name type="primary">GATAD2A</name>
</gene>
<name>P66A_HUMAN</name>
<evidence type="ECO:0000250" key="1">
    <source>
        <dbReference type="UniProtKB" id="Q8CHY6"/>
    </source>
</evidence>
<evidence type="ECO:0000255" key="2"/>
<evidence type="ECO:0000255" key="3">
    <source>
        <dbReference type="PROSITE-ProRule" id="PRU00094"/>
    </source>
</evidence>
<evidence type="ECO:0000256" key="4">
    <source>
        <dbReference type="SAM" id="MobiDB-lite"/>
    </source>
</evidence>
<evidence type="ECO:0000269" key="5">
    <source>
    </source>
</evidence>
<evidence type="ECO:0000269" key="6">
    <source>
    </source>
</evidence>
<evidence type="ECO:0000269" key="7">
    <source>
    </source>
</evidence>
<evidence type="ECO:0000269" key="8">
    <source>
    </source>
</evidence>
<evidence type="ECO:0000269" key="9">
    <source>
    </source>
</evidence>
<evidence type="ECO:0000269" key="10">
    <source>
    </source>
</evidence>
<evidence type="ECO:0000269" key="11">
    <source>
    </source>
</evidence>
<evidence type="ECO:0000269" key="12">
    <source>
    </source>
</evidence>
<evidence type="ECO:0000269" key="13">
    <source>
    </source>
</evidence>
<evidence type="ECO:0000303" key="14">
    <source>
    </source>
</evidence>
<evidence type="ECO:0000303" key="15">
    <source>
    </source>
</evidence>
<evidence type="ECO:0000305" key="16"/>
<evidence type="ECO:0007744" key="17">
    <source>
    </source>
</evidence>
<evidence type="ECO:0007744" key="18">
    <source>
    </source>
</evidence>
<evidence type="ECO:0007744" key="19">
    <source>
    </source>
</evidence>
<evidence type="ECO:0007744" key="20">
    <source>
    </source>
</evidence>
<evidence type="ECO:0007744" key="21">
    <source>
    </source>
</evidence>
<evidence type="ECO:0007744" key="22">
    <source>
    </source>
</evidence>
<evidence type="ECO:0007744" key="23">
    <source>
    </source>
</evidence>
<evidence type="ECO:0007744" key="24">
    <source>
    </source>
</evidence>
<evidence type="ECO:0007744" key="25">
    <source>
    </source>
</evidence>
<evidence type="ECO:0007744" key="26">
    <source>
    </source>
</evidence>
<evidence type="ECO:0007744" key="27">
    <source>
    </source>
</evidence>
<evidence type="ECO:0007744" key="28">
    <source>
    </source>
</evidence>
<evidence type="ECO:0007744" key="29">
    <source>
    </source>
</evidence>
<evidence type="ECO:0007829" key="30">
    <source>
        <dbReference type="PDB" id="2L2L"/>
    </source>
</evidence>
<organism>
    <name type="scientific">Homo sapiens</name>
    <name type="common">Human</name>
    <dbReference type="NCBI Taxonomy" id="9606"/>
    <lineage>
        <taxon>Eukaryota</taxon>
        <taxon>Metazoa</taxon>
        <taxon>Chordata</taxon>
        <taxon>Craniata</taxon>
        <taxon>Vertebrata</taxon>
        <taxon>Euteleostomi</taxon>
        <taxon>Mammalia</taxon>
        <taxon>Eutheria</taxon>
        <taxon>Euarchontoglires</taxon>
        <taxon>Primates</taxon>
        <taxon>Haplorrhini</taxon>
        <taxon>Catarrhini</taxon>
        <taxon>Hominidae</taxon>
        <taxon>Homo</taxon>
    </lineage>
</organism>
<protein>
    <recommendedName>
        <fullName>Transcriptional repressor p66-alpha</fullName>
        <shortName>Hp66alpha</shortName>
    </recommendedName>
    <alternativeName>
        <fullName>GATA zinc finger domain-containing protein 2A</fullName>
    </alternativeName>
</protein>
<dbReference type="EMBL" id="AY186731">
    <property type="protein sequence ID" value="AAO31797.1"/>
    <property type="molecule type" value="mRNA"/>
</dbReference>
<dbReference type="EMBL" id="AC003030">
    <property type="status" value="NOT_ANNOTATED_CDS"/>
    <property type="molecule type" value="Genomic_DNA"/>
</dbReference>
<dbReference type="EMBL" id="AC011448">
    <property type="status" value="NOT_ANNOTATED_CDS"/>
    <property type="molecule type" value="Genomic_DNA"/>
</dbReference>
<dbReference type="EMBL" id="AC092067">
    <property type="status" value="NOT_ANNOTATED_CDS"/>
    <property type="molecule type" value="Genomic_DNA"/>
</dbReference>
<dbReference type="EMBL" id="CH471106">
    <property type="protein sequence ID" value="EAW84819.1"/>
    <property type="molecule type" value="Genomic_DNA"/>
</dbReference>
<dbReference type="EMBL" id="BC011684">
    <property type="protein sequence ID" value="AAH11684.1"/>
    <property type="status" value="ALT_INIT"/>
    <property type="molecule type" value="mRNA"/>
</dbReference>
<dbReference type="EMBL" id="BC012902">
    <property type="protein sequence ID" value="AAH12902.2"/>
    <property type="molecule type" value="mRNA"/>
</dbReference>
<dbReference type="EMBL" id="AK000092">
    <property type="protein sequence ID" value="BAA90939.1"/>
    <property type="status" value="ALT_INIT"/>
    <property type="molecule type" value="mRNA"/>
</dbReference>
<dbReference type="EMBL" id="AL390164">
    <property type="protein sequence ID" value="CAB99095.1"/>
    <property type="molecule type" value="mRNA"/>
</dbReference>
<dbReference type="CCDS" id="CCDS12402.2">
    <molecule id="Q86YP4-1"/>
</dbReference>
<dbReference type="CCDS" id="CCDS77270.1">
    <molecule id="Q86YP4-3"/>
</dbReference>
<dbReference type="PIR" id="T51878">
    <property type="entry name" value="T51878"/>
</dbReference>
<dbReference type="RefSeq" id="NP_001287875.1">
    <molecule id="Q86YP4-3"/>
    <property type="nucleotide sequence ID" value="NM_001300946.3"/>
</dbReference>
<dbReference type="RefSeq" id="NP_001371440.1">
    <molecule id="Q86YP4-3"/>
    <property type="nucleotide sequence ID" value="NM_001384511.1"/>
</dbReference>
<dbReference type="RefSeq" id="NP_001371441.1">
    <molecule id="Q86YP4-3"/>
    <property type="nucleotide sequence ID" value="NM_001384512.1"/>
</dbReference>
<dbReference type="RefSeq" id="NP_001371442.1">
    <molecule id="Q86YP4-3"/>
    <property type="nucleotide sequence ID" value="NM_001384513.1"/>
</dbReference>
<dbReference type="RefSeq" id="NP_001371443.1">
    <molecule id="Q86YP4-3"/>
    <property type="nucleotide sequence ID" value="NM_001384514.1"/>
</dbReference>
<dbReference type="RefSeq" id="NP_001371444.1">
    <molecule id="Q86YP4-3"/>
    <property type="nucleotide sequence ID" value="NM_001384515.1"/>
</dbReference>
<dbReference type="RefSeq" id="NP_001371445.1">
    <molecule id="Q86YP4-3"/>
    <property type="nucleotide sequence ID" value="NM_001384516.1"/>
</dbReference>
<dbReference type="RefSeq" id="NP_001371446.1">
    <molecule id="Q86YP4-3"/>
    <property type="nucleotide sequence ID" value="NM_001384517.1"/>
</dbReference>
<dbReference type="RefSeq" id="NP_001371447.1">
    <molecule id="Q86YP4-3"/>
    <property type="nucleotide sequence ID" value="NM_001384518.1"/>
</dbReference>
<dbReference type="RefSeq" id="NP_001371448.1">
    <molecule id="Q86YP4-3"/>
    <property type="nucleotide sequence ID" value="NM_001384519.1"/>
</dbReference>
<dbReference type="RefSeq" id="NP_001371450.1">
    <molecule id="Q86YP4-3"/>
    <property type="nucleotide sequence ID" value="NM_001384521.1"/>
</dbReference>
<dbReference type="RefSeq" id="NP_001371451.1">
    <molecule id="Q86YP4-3"/>
    <property type="nucleotide sequence ID" value="NM_001384522.1"/>
</dbReference>
<dbReference type="RefSeq" id="NP_001371452.1">
    <molecule id="Q86YP4-3"/>
    <property type="nucleotide sequence ID" value="NM_001384523.1"/>
</dbReference>
<dbReference type="RefSeq" id="NP_001371453.1">
    <molecule id="Q86YP4-3"/>
    <property type="nucleotide sequence ID" value="NM_001384524.1"/>
</dbReference>
<dbReference type="RefSeq" id="NP_001371454.1">
    <molecule id="Q86YP4-3"/>
    <property type="nucleotide sequence ID" value="NM_001384525.1"/>
</dbReference>
<dbReference type="RefSeq" id="NP_001371455.1">
    <molecule id="Q86YP4-3"/>
    <property type="nucleotide sequence ID" value="NM_001384526.1"/>
</dbReference>
<dbReference type="RefSeq" id="NP_001371456.1">
    <molecule id="Q86YP4-3"/>
    <property type="nucleotide sequence ID" value="NM_001384527.1"/>
</dbReference>
<dbReference type="RefSeq" id="NP_001371457.1">
    <molecule id="Q86YP4-3"/>
    <property type="nucleotide sequence ID" value="NM_001384528.1"/>
</dbReference>
<dbReference type="RefSeq" id="NP_001371458.1">
    <molecule id="Q86YP4-1"/>
    <property type="nucleotide sequence ID" value="NM_001384529.1"/>
</dbReference>
<dbReference type="RefSeq" id="NP_001371459.1">
    <molecule id="Q86YP4-1"/>
    <property type="nucleotide sequence ID" value="NM_001384530.1"/>
</dbReference>
<dbReference type="RefSeq" id="NP_001371460.1">
    <molecule id="Q86YP4-1"/>
    <property type="nucleotide sequence ID" value="NM_001384531.1"/>
</dbReference>
<dbReference type="RefSeq" id="NP_001371461.1">
    <molecule id="Q86YP4-1"/>
    <property type="nucleotide sequence ID" value="NM_001384532.1"/>
</dbReference>
<dbReference type="RefSeq" id="NP_001371462.1">
    <molecule id="Q86YP4-1"/>
    <property type="nucleotide sequence ID" value="NM_001384533.1"/>
</dbReference>
<dbReference type="RefSeq" id="NP_001371467.1">
    <molecule id="Q86YP4-2"/>
    <property type="nucleotide sequence ID" value="NM_001384538.1"/>
</dbReference>
<dbReference type="RefSeq" id="NP_060130.3">
    <molecule id="Q86YP4-1"/>
    <property type="nucleotide sequence ID" value="NM_017660.3"/>
</dbReference>
<dbReference type="RefSeq" id="XP_011526407.1">
    <property type="nucleotide sequence ID" value="XM_011528105.1"/>
</dbReference>
<dbReference type="RefSeq" id="XP_047294958.1">
    <molecule id="Q86YP4-3"/>
    <property type="nucleotide sequence ID" value="XM_047439002.1"/>
</dbReference>
<dbReference type="RefSeq" id="XP_047294959.1">
    <molecule id="Q86YP4-3"/>
    <property type="nucleotide sequence ID" value="XM_047439003.1"/>
</dbReference>
<dbReference type="RefSeq" id="XP_047294960.1">
    <molecule id="Q86YP4-3"/>
    <property type="nucleotide sequence ID" value="XM_047439004.1"/>
</dbReference>
<dbReference type="RefSeq" id="XP_047294961.1">
    <molecule id="Q86YP4-3"/>
    <property type="nucleotide sequence ID" value="XM_047439005.1"/>
</dbReference>
<dbReference type="RefSeq" id="XP_047294962.1">
    <molecule id="Q86YP4-3"/>
    <property type="nucleotide sequence ID" value="XM_047439006.1"/>
</dbReference>
<dbReference type="RefSeq" id="XP_047294963.1">
    <molecule id="Q86YP4-3"/>
    <property type="nucleotide sequence ID" value="XM_047439007.1"/>
</dbReference>
<dbReference type="RefSeq" id="XP_054177286.1">
    <molecule id="Q86YP4-1"/>
    <property type="nucleotide sequence ID" value="XM_054321311.1"/>
</dbReference>
<dbReference type="RefSeq" id="XP_054177291.1">
    <molecule id="Q86YP4-2"/>
    <property type="nucleotide sequence ID" value="XM_054321316.1"/>
</dbReference>
<dbReference type="RefSeq" id="XP_054177293.1">
    <molecule id="Q86YP4-3"/>
    <property type="nucleotide sequence ID" value="XM_054321318.1"/>
</dbReference>
<dbReference type="RefSeq" id="XP_054177294.1">
    <molecule id="Q86YP4-3"/>
    <property type="nucleotide sequence ID" value="XM_054321319.1"/>
</dbReference>
<dbReference type="RefSeq" id="XP_054177295.1">
    <molecule id="Q86YP4-3"/>
    <property type="nucleotide sequence ID" value="XM_054321320.1"/>
</dbReference>
<dbReference type="RefSeq" id="XP_054177296.1">
    <molecule id="Q86YP4-3"/>
    <property type="nucleotide sequence ID" value="XM_054321321.1"/>
</dbReference>
<dbReference type="RefSeq" id="XP_054177297.1">
    <molecule id="Q86YP4-3"/>
    <property type="nucleotide sequence ID" value="XM_054321322.1"/>
</dbReference>
<dbReference type="PDB" id="2L2L">
    <property type="method" value="NMR"/>
    <property type="chains" value="A=137-178"/>
</dbReference>
<dbReference type="PDBsum" id="2L2L"/>
<dbReference type="BMRB" id="Q86YP4"/>
<dbReference type="SMR" id="Q86YP4"/>
<dbReference type="BioGRID" id="120172">
    <property type="interactions" value="242"/>
</dbReference>
<dbReference type="ComplexPortal" id="CPX-880">
    <property type="entry name" value="MBD2/NuRD nucleosome remodeling and deacetylase complex"/>
</dbReference>
<dbReference type="ComplexPortal" id="CPX-922">
    <property type="entry name" value="MBD3/NuRD nucleosome remodeling and deacetylase complex"/>
</dbReference>
<dbReference type="CORUM" id="Q86YP4"/>
<dbReference type="DIP" id="DIP-36053N"/>
<dbReference type="FunCoup" id="Q86YP4">
    <property type="interactions" value="3237"/>
</dbReference>
<dbReference type="IntAct" id="Q86YP4">
    <property type="interactions" value="116"/>
</dbReference>
<dbReference type="MINT" id="Q86YP4"/>
<dbReference type="STRING" id="9606.ENSP00000384899"/>
<dbReference type="GlyCosmos" id="Q86YP4">
    <property type="glycosylation" value="17 sites, 2 glycans"/>
</dbReference>
<dbReference type="GlyGen" id="Q86YP4">
    <property type="glycosylation" value="35 sites, 2 O-linked glycans (33 sites)"/>
</dbReference>
<dbReference type="iPTMnet" id="Q86YP4"/>
<dbReference type="MetOSite" id="Q86YP4"/>
<dbReference type="PhosphoSitePlus" id="Q86YP4"/>
<dbReference type="BioMuta" id="GATAD2A"/>
<dbReference type="DMDM" id="50401012"/>
<dbReference type="jPOST" id="Q86YP4"/>
<dbReference type="MassIVE" id="Q86YP4"/>
<dbReference type="PaxDb" id="9606-ENSP00000353463"/>
<dbReference type="PeptideAtlas" id="Q86YP4"/>
<dbReference type="ProteomicsDB" id="5986"/>
<dbReference type="ProteomicsDB" id="70446">
    <molecule id="Q86YP4-1"/>
</dbReference>
<dbReference type="ProteomicsDB" id="70447">
    <molecule id="Q86YP4-2"/>
</dbReference>
<dbReference type="Pumba" id="Q86YP4"/>
<dbReference type="Antibodypedia" id="1819">
    <property type="antibodies" value="237 antibodies from 27 providers"/>
</dbReference>
<dbReference type="DNASU" id="54815"/>
<dbReference type="Ensembl" id="ENST00000358713.7">
    <molecule id="Q86YP4-1"/>
    <property type="protein sequence ID" value="ENSP00000351552.3"/>
    <property type="gene ID" value="ENSG00000167491.18"/>
</dbReference>
<dbReference type="Ensembl" id="ENST00000360315.7">
    <molecule id="Q86YP4-1"/>
    <property type="protein sequence ID" value="ENSP00000353463.3"/>
    <property type="gene ID" value="ENSG00000167491.18"/>
</dbReference>
<dbReference type="Ensembl" id="ENST00000404158.5">
    <molecule id="Q86YP4-3"/>
    <property type="protein sequence ID" value="ENSP00000384899.2"/>
    <property type="gene ID" value="ENSG00000167491.18"/>
</dbReference>
<dbReference type="Ensembl" id="ENST00000683918.1">
    <molecule id="Q86YP4-3"/>
    <property type="protein sequence ID" value="ENSP00000508398.1"/>
    <property type="gene ID" value="ENSG00000167491.18"/>
</dbReference>
<dbReference type="GeneID" id="54815"/>
<dbReference type="KEGG" id="hsa:54815"/>
<dbReference type="MANE-Select" id="ENST00000683918.1">
    <molecule id="Q86YP4-3"/>
    <property type="protein sequence ID" value="ENSP00000508398.1"/>
    <property type="RefSeq nucleotide sequence ID" value="NM_001384528.1"/>
    <property type="RefSeq protein sequence ID" value="NP_001371457.1"/>
</dbReference>
<dbReference type="UCSC" id="uc010xqt.3">
    <molecule id="Q86YP4-1"/>
    <property type="organism name" value="human"/>
</dbReference>
<dbReference type="AGR" id="HGNC:29989"/>
<dbReference type="CTD" id="54815"/>
<dbReference type="DisGeNET" id="54815"/>
<dbReference type="GeneCards" id="GATAD2A"/>
<dbReference type="HGNC" id="HGNC:29989">
    <property type="gene designation" value="GATAD2A"/>
</dbReference>
<dbReference type="HPA" id="ENSG00000167491">
    <property type="expression patterns" value="Low tissue specificity"/>
</dbReference>
<dbReference type="MalaCards" id="GATAD2A"/>
<dbReference type="MIM" id="614997">
    <property type="type" value="gene"/>
</dbReference>
<dbReference type="neXtProt" id="NX_Q86YP4"/>
<dbReference type="OpenTargets" id="ENSG00000167491"/>
<dbReference type="PharmGKB" id="PA142671746"/>
<dbReference type="VEuPathDB" id="HostDB:ENSG00000167491"/>
<dbReference type="eggNOG" id="KOG3740">
    <property type="taxonomic scope" value="Eukaryota"/>
</dbReference>
<dbReference type="GeneTree" id="ENSGT00390000004097"/>
<dbReference type="HOGENOM" id="CLU_014315_1_0_1"/>
<dbReference type="InParanoid" id="Q86YP4"/>
<dbReference type="OMA" id="DMRVIPE"/>
<dbReference type="OrthoDB" id="8186989at2759"/>
<dbReference type="PAN-GO" id="Q86YP4">
    <property type="GO annotations" value="2 GO annotations based on evolutionary models"/>
</dbReference>
<dbReference type="PhylomeDB" id="Q86YP4"/>
<dbReference type="TreeFam" id="TF321369"/>
<dbReference type="PathwayCommons" id="Q86YP4"/>
<dbReference type="Reactome" id="R-HSA-3214815">
    <property type="pathway name" value="HDACs deacetylate histones"/>
</dbReference>
<dbReference type="Reactome" id="R-HSA-427389">
    <property type="pathway name" value="ERCC6 (CSB) and EHMT2 (G9a) positively regulate rRNA expression"/>
</dbReference>
<dbReference type="Reactome" id="R-HSA-6804758">
    <property type="pathway name" value="Regulation of TP53 Activity through Acetylation"/>
</dbReference>
<dbReference type="Reactome" id="R-HSA-73762">
    <property type="pathway name" value="RNA Polymerase I Transcription Initiation"/>
</dbReference>
<dbReference type="Reactome" id="R-HSA-8943724">
    <property type="pathway name" value="Regulation of PTEN gene transcription"/>
</dbReference>
<dbReference type="Reactome" id="R-HSA-9679191">
    <property type="pathway name" value="Potential therapeutics for SARS"/>
</dbReference>
<dbReference type="Reactome" id="R-HSA-9843940">
    <property type="pathway name" value="Regulation of endogenous retroelements by KRAB-ZFP proteins"/>
</dbReference>
<dbReference type="Reactome" id="R-HSA-9844594">
    <property type="pathway name" value="Transcriptional regulation of brown and beige adipocyte differentiation by EBF2"/>
</dbReference>
<dbReference type="Reactome" id="R-HSA-9845323">
    <property type="pathway name" value="Regulation of endogenous retroelements by Piwi-interacting RNAs (piRNAs)"/>
</dbReference>
<dbReference type="SignaLink" id="Q86YP4"/>
<dbReference type="SIGNOR" id="Q86YP4"/>
<dbReference type="BioGRID-ORCS" id="54815">
    <property type="hits" value="144 hits in 1166 CRISPR screens"/>
</dbReference>
<dbReference type="CD-CODE" id="804901D1">
    <property type="entry name" value="Nuclear speckle"/>
</dbReference>
<dbReference type="ChiTaRS" id="GATAD2A">
    <property type="organism name" value="human"/>
</dbReference>
<dbReference type="GenomeRNAi" id="54815"/>
<dbReference type="Pharos" id="Q86YP4">
    <property type="development level" value="Tbio"/>
</dbReference>
<dbReference type="PRO" id="PR:Q86YP4"/>
<dbReference type="Proteomes" id="UP000005640">
    <property type="component" value="Chromosome 19"/>
</dbReference>
<dbReference type="RNAct" id="Q86YP4">
    <property type="molecule type" value="protein"/>
</dbReference>
<dbReference type="Bgee" id="ENSG00000167491">
    <property type="expression patterns" value="Expressed in buccal mucosa cell and 194 other cell types or tissues"/>
</dbReference>
<dbReference type="ExpressionAtlas" id="Q86YP4">
    <property type="expression patterns" value="baseline and differential"/>
</dbReference>
<dbReference type="GO" id="GO:0016607">
    <property type="term" value="C:nuclear speck"/>
    <property type="evidence" value="ECO:0007669"/>
    <property type="project" value="UniProtKB-SubCell"/>
</dbReference>
<dbReference type="GO" id="GO:0005654">
    <property type="term" value="C:nucleoplasm"/>
    <property type="evidence" value="ECO:0000314"/>
    <property type="project" value="HPA"/>
</dbReference>
<dbReference type="GO" id="GO:0005634">
    <property type="term" value="C:nucleus"/>
    <property type="evidence" value="ECO:0000314"/>
    <property type="project" value="UniProtKB"/>
</dbReference>
<dbReference type="GO" id="GO:0016581">
    <property type="term" value="C:NuRD complex"/>
    <property type="evidence" value="ECO:0000314"/>
    <property type="project" value="UniProtKB"/>
</dbReference>
<dbReference type="GO" id="GO:0030674">
    <property type="term" value="F:protein-macromolecule adaptor activity"/>
    <property type="evidence" value="ECO:0000314"/>
    <property type="project" value="UniProtKB"/>
</dbReference>
<dbReference type="GO" id="GO:0043565">
    <property type="term" value="F:sequence-specific DNA binding"/>
    <property type="evidence" value="ECO:0007669"/>
    <property type="project" value="InterPro"/>
</dbReference>
<dbReference type="GO" id="GO:0008270">
    <property type="term" value="F:zinc ion binding"/>
    <property type="evidence" value="ECO:0007669"/>
    <property type="project" value="UniProtKB-KW"/>
</dbReference>
<dbReference type="GO" id="GO:0006338">
    <property type="term" value="P:chromatin remodeling"/>
    <property type="evidence" value="ECO:0000314"/>
    <property type="project" value="ComplexPortal"/>
</dbReference>
<dbReference type="GO" id="GO:0045892">
    <property type="term" value="P:negative regulation of DNA-templated transcription"/>
    <property type="evidence" value="ECO:0000314"/>
    <property type="project" value="UniProtKB"/>
</dbReference>
<dbReference type="GO" id="GO:0000122">
    <property type="term" value="P:negative regulation of transcription by RNA polymerase II"/>
    <property type="evidence" value="ECO:0000318"/>
    <property type="project" value="GO_Central"/>
</dbReference>
<dbReference type="GO" id="GO:0045893">
    <property type="term" value="P:positive regulation of DNA-templated transcription"/>
    <property type="evidence" value="ECO:0000303"/>
    <property type="project" value="ComplexPortal"/>
</dbReference>
<dbReference type="GO" id="GO:0042659">
    <property type="term" value="P:regulation of cell fate specification"/>
    <property type="evidence" value="ECO:0000303"/>
    <property type="project" value="ComplexPortal"/>
</dbReference>
<dbReference type="GO" id="GO:2000736">
    <property type="term" value="P:regulation of stem cell differentiation"/>
    <property type="evidence" value="ECO:0000303"/>
    <property type="project" value="ComplexPortal"/>
</dbReference>
<dbReference type="Gene3D" id="6.10.250.1650">
    <property type="match status" value="1"/>
</dbReference>
<dbReference type="IDEAL" id="IID00731"/>
<dbReference type="InterPro" id="IPR040386">
    <property type="entry name" value="P66"/>
</dbReference>
<dbReference type="InterPro" id="IPR032346">
    <property type="entry name" value="P66_CC"/>
</dbReference>
<dbReference type="InterPro" id="IPR000679">
    <property type="entry name" value="Znf_GATA"/>
</dbReference>
<dbReference type="PANTHER" id="PTHR13455:SF3">
    <property type="entry name" value="TRANSCRIPTIONAL REPRESSOR P66-ALPHA"/>
    <property type="match status" value="1"/>
</dbReference>
<dbReference type="PANTHER" id="PTHR13455">
    <property type="entry name" value="TRANSCRIPTIONAL REPRESSOR P66-RELATED"/>
    <property type="match status" value="1"/>
</dbReference>
<dbReference type="Pfam" id="PF00320">
    <property type="entry name" value="GATA"/>
    <property type="match status" value="1"/>
</dbReference>
<dbReference type="Pfam" id="PF16563">
    <property type="entry name" value="P66_CC"/>
    <property type="match status" value="1"/>
</dbReference>
<dbReference type="PROSITE" id="PS00344">
    <property type="entry name" value="GATA_ZN_FINGER_1"/>
    <property type="match status" value="1"/>
</dbReference>
<dbReference type="PROSITE" id="PS50114">
    <property type="entry name" value="GATA_ZN_FINGER_2"/>
    <property type="match status" value="1"/>
</dbReference>
<feature type="chain" id="PRO_0000083500" description="Transcriptional repressor p66-alpha">
    <location>
        <begin position="1"/>
        <end position="633"/>
    </location>
</feature>
<feature type="zinc finger region" description="GATA-type" evidence="3">
    <location>
        <begin position="411"/>
        <end position="464"/>
    </location>
</feature>
<feature type="region of interest" description="Disordered" evidence="4">
    <location>
        <begin position="1"/>
        <end position="59"/>
    </location>
</feature>
<feature type="region of interest" description="Disordered" evidence="4">
    <location>
        <begin position="73"/>
        <end position="119"/>
    </location>
</feature>
<feature type="region of interest" description="CR1; interaction with HDAC1, HDAC2, MBD2 and MTA2" evidence="5 12">
    <location>
        <begin position="144"/>
        <end position="178"/>
    </location>
</feature>
<feature type="region of interest" description="Disordered" evidence="4">
    <location>
        <begin position="172"/>
        <end position="238"/>
    </location>
</feature>
<feature type="region of interest" description="Interaction with ZMYND8" evidence="10">
    <location>
        <begin position="181"/>
        <end position="295"/>
    </location>
</feature>
<feature type="region of interest" description="CR2; histone tail-binding and interaction with CHD4 and CDK2AP1" evidence="6 12">
    <location>
        <begin position="340"/>
        <end position="480"/>
    </location>
</feature>
<feature type="region of interest" description="Disordered" evidence="4">
    <location>
        <begin position="561"/>
        <end position="585"/>
    </location>
</feature>
<feature type="coiled-coil region" evidence="2">
    <location>
        <begin position="139"/>
        <end position="174"/>
    </location>
</feature>
<feature type="compositionally biased region" description="Basic and acidic residues" evidence="4">
    <location>
        <begin position="1"/>
        <end position="18"/>
    </location>
</feature>
<feature type="compositionally biased region" description="Basic and acidic residues" evidence="4">
    <location>
        <begin position="86"/>
        <end position="99"/>
    </location>
</feature>
<feature type="compositionally biased region" description="Polar residues" evidence="4">
    <location>
        <begin position="108"/>
        <end position="119"/>
    </location>
</feature>
<feature type="compositionally biased region" description="Polar residues" evidence="4">
    <location>
        <begin position="172"/>
        <end position="188"/>
    </location>
</feature>
<feature type="compositionally biased region" description="Polar residues" evidence="4">
    <location>
        <begin position="196"/>
        <end position="212"/>
    </location>
</feature>
<feature type="compositionally biased region" description="Polar residues" evidence="4">
    <location>
        <begin position="228"/>
        <end position="238"/>
    </location>
</feature>
<feature type="modified residue" description="Phosphothreonine" evidence="23">
    <location>
        <position position="20"/>
    </location>
</feature>
<feature type="modified residue" description="Phosphothreonine" evidence="18 19 20 21 22 23 25">
    <location>
        <position position="49"/>
    </location>
</feature>
<feature type="modified residue" description="Phosphoserine" evidence="17 18 19 20 21 22 23 25">
    <location>
        <position position="100"/>
    </location>
</feature>
<feature type="modified residue" description="Phosphoserine" evidence="17 18 19 20 21 22 23 25">
    <location>
        <position position="107"/>
    </location>
</feature>
<feature type="modified residue" description="Phosphoserine" evidence="1">
    <location>
        <position position="113"/>
    </location>
</feature>
<feature type="modified residue" description="Phosphoserine" evidence="17 19 20 23">
    <location>
        <position position="114"/>
    </location>
</feature>
<feature type="modified residue" description="Phosphoserine" evidence="23">
    <location>
        <position position="137"/>
    </location>
</feature>
<feature type="modified residue" description="Phosphothreonine" evidence="20 23 25">
    <location>
        <position position="189"/>
    </location>
</feature>
<feature type="modified residue" description="Omega-N-methylarginine" evidence="1">
    <location>
        <position position="225"/>
    </location>
</feature>
<feature type="modified residue" description="Omega-N-methylarginine" evidence="24">
    <location>
        <position position="249"/>
    </location>
</feature>
<feature type="modified residue" description="Omega-N-methylarginine" evidence="24">
    <location>
        <position position="258"/>
    </location>
</feature>
<feature type="modified residue" description="Omega-N-methylarginine" evidence="24">
    <location>
        <position position="273"/>
    </location>
</feature>
<feature type="modified residue" description="Phosphoserine" evidence="23">
    <location>
        <position position="275"/>
    </location>
</feature>
<feature type="modified residue" description="Omega-N-methylarginine" evidence="24">
    <location>
        <position position="285"/>
    </location>
</feature>
<feature type="modified residue" description="Phosphoserine" evidence="20 23">
    <location>
        <position position="340"/>
    </location>
</feature>
<feature type="modified residue" description="Phosphoserine" evidence="22">
    <location>
        <position position="343"/>
    </location>
</feature>
<feature type="modified residue" description="Phosphoserine" evidence="23">
    <location>
        <position position="512"/>
    </location>
</feature>
<feature type="modified residue" description="Asymmetric dimethylarginine; alternate" evidence="24">
    <location>
        <position position="539"/>
    </location>
</feature>
<feature type="modified residue" description="Omega-N-methylarginine; alternate" evidence="24">
    <location>
        <position position="539"/>
    </location>
</feature>
<feature type="modified residue" description="Phosphoserine" evidence="19 21 23">
    <location>
        <position position="546"/>
    </location>
</feature>
<feature type="modified residue" description="Phosphoserine" evidence="19 21 23">
    <location>
        <position position="548"/>
    </location>
</feature>
<feature type="modified residue" description="Phosphoserine" evidence="23">
    <location>
        <position position="556"/>
    </location>
</feature>
<feature type="modified residue" description="Phosphoserine" evidence="19 23">
    <location>
        <position position="598"/>
    </location>
</feature>
<feature type="cross-link" description="Glycyl lysine isopeptide (Lys-Gly) (interchain with G-Cter in SUMO2)" evidence="29">
    <location>
        <position position="93"/>
    </location>
</feature>
<feature type="cross-link" description="Glycyl lysine isopeptide (Lys-Gly) (interchain with G-Cter in SUMO2)" evidence="29">
    <location>
        <position position="178"/>
    </location>
</feature>
<feature type="cross-link" description="Glycyl lysine isopeptide (Lys-Gly) (interchain with G-Cter in SUMO2)" evidence="29">
    <location>
        <position position="204"/>
    </location>
</feature>
<feature type="cross-link" description="Glycyl lysine isopeptide (Lys-Gly) (interchain with G-Cter in SUMO2)" evidence="29">
    <location>
        <position position="233"/>
    </location>
</feature>
<feature type="cross-link" description="Glycyl lysine isopeptide (Lys-Gly) (interchain with G-Cter in SUMO2)" evidence="29">
    <location>
        <position position="464"/>
    </location>
</feature>
<feature type="cross-link" description="Glycyl lysine isopeptide (Lys-Gly) (interchain with G-Cter in SUMO2)" evidence="26 27 28 29">
    <location>
        <position position="487"/>
    </location>
</feature>
<feature type="cross-link" description="Glycyl lysine isopeptide (Lys-Gly) (interchain with G-Cter in SUMO2)" evidence="26 28 29">
    <location>
        <position position="550"/>
    </location>
</feature>
<feature type="cross-link" description="Glycyl lysine isopeptide (Lys-Gly) (interchain with G-Cter in SUMO2)" evidence="29">
    <location>
        <position position="585"/>
    </location>
</feature>
<feature type="cross-link" description="Glycyl lysine isopeptide (Lys-Gly) (interchain with G-Cter in SUMO2)" evidence="29">
    <location>
        <position position="605"/>
    </location>
</feature>
<feature type="splice variant" id="VSP_053410" description="In isoform 3." evidence="14">
    <original>Q</original>
    <variation>QA</variation>
    <location>
        <position position="401"/>
    </location>
</feature>
<feature type="splice variant" id="VSP_010929" description="In isoform 2." evidence="15">
    <location>
        <begin position="500"/>
        <end position="524"/>
    </location>
</feature>
<feature type="sequence variant" id="VAR_059308" description="In dbSNP:rs10426883.">
    <original>R</original>
    <variation>Q</variation>
    <location>
        <position position="17"/>
    </location>
</feature>
<feature type="sequence variant" id="VAR_059309" description="In dbSNP:rs2288851.">
    <original>N</original>
    <variation>S</variation>
    <location>
        <position position="296"/>
    </location>
</feature>
<feature type="mutagenesis site" description="Disruption of MBD2-binding, loss of enhancement of MBD2-mediated repression and loss of speckled nuclear localization." evidence="6">
    <original>K</original>
    <variation>R</variation>
    <location>
        <position position="149"/>
    </location>
</feature>
<feature type="sequence conflict" description="In Ref. 5; BAA90939." evidence="16" ref="5">
    <original>K</original>
    <variation>E</variation>
    <location>
        <position position="432"/>
    </location>
</feature>
<feature type="helix" evidence="30">
    <location>
        <begin position="138"/>
        <end position="168"/>
    </location>
</feature>
<comment type="function">
    <text evidence="5 6 7 11">Transcriptional repressor (PubMed:12183469, PubMed:16415179). Acts as a component of the histone deacetylase NuRD complex which participates in the remodeling of chromatin (PubMed:16428440, PubMed:28977666). Enhances MBD2-mediated repression (PubMed:12183469, PubMed:16415179). Efficient repression requires the presence of GATAD2B (PubMed:16415179).</text>
</comment>
<comment type="subunit">
    <text evidence="5 6 7 8 9 10 11 12 13">Homooligomer (PubMed:27732854). Component of the nucleosome remodeling and deacetylase (NuRD) repressor complex, composed of core proteins MTA1, MTA2, MTA3, RBBP4, RBBP7, HDAC1, HDAC2, MBD2, MBD3, and peripherally associated proteins CDK2AP1, CDK2AP2, GATAD2A, GATAD2B, CHD3, CHD4 and CHD5 (PubMed:16428440, PubMed:27732854, PubMed:28977666, PubMed:33283408). The exact stoichiometry of the NuRD complex is unknown, and some subunits such as MBD2 and MBD3, GATAD2A and GATAD2B, and CHD3, CHD4 and CHD5 define mutually exclusive NuRD complexes (PubMed:16428440, PubMed:27732854, PubMed:28977666, PubMed:33283408). Component of the MeCP1 histone deacetylase complex (PubMed:21490301). Interacts with CDK2AP1 (PubMed:33283408). Interacts with CHD4 (PubMed:33283408). Interacts with ERCC6 (PubMed:26030138). Interacts with HDAC1 (PubMed:33283408). Interacts with HDAC2 (PubMed:33283408). Interacts with MBD2; this interaction is required for the enhancement of MBD2-mediated repression and for targeting to the chromatin (PubMed:12183469, PubMed:16415179, PubMed:21490301, PubMed:27732854, PubMed:33283408). Interacts with MBD3 (PubMed:12183469, PubMed:27732854). Interacts with MTA2 (PubMed:33283408). Interacts with ZMYND8 (PubMed:27732854, PubMed:35916866). Interacts with histone tails, including that of histones H2A, H2B, H3 and H4, the interaction is reduced by histone acetylation (PubMed:16415179).</text>
</comment>
<comment type="interaction">
    <interactant intactId="EBI-726224">
        <id>Q86YP4</id>
    </interactant>
    <interactant intactId="EBI-618309">
        <id>Q08379</id>
        <label>GOLGA2</label>
    </interactant>
    <organismsDiffer>false</organismsDiffer>
    <experiments>3</experiments>
</comment>
<comment type="interaction">
    <interactant intactId="EBI-726224">
        <id>Q86YP4</id>
    </interactant>
    <interactant intactId="EBI-1044146">
        <id>Q14532</id>
        <label>KRT32</label>
    </interactant>
    <organismsDiffer>false</organismsDiffer>
    <experiments>3</experiments>
</comment>
<comment type="interaction">
    <interactant intactId="EBI-726224">
        <id>Q86YP4</id>
    </interactant>
    <interactant intactId="EBI-1047093">
        <id>O76011</id>
        <label>KRT34</label>
    </interactant>
    <organismsDiffer>false</organismsDiffer>
    <experiments>3</experiments>
</comment>
<comment type="interaction">
    <interactant intactId="EBI-726224">
        <id>Q86YP4</id>
    </interactant>
    <interactant intactId="EBI-923391">
        <id>Q9UBB5</id>
        <label>MBD2</label>
    </interactant>
    <organismsDiffer>false</organismsDiffer>
    <experiments>10</experiments>
</comment>
<comment type="interaction">
    <interactant intactId="EBI-726224">
        <id>Q86YP4</id>
    </interactant>
    <interactant intactId="EBI-11978579">
        <id>O95983-2</id>
        <label>MBD3</label>
    </interactant>
    <organismsDiffer>false</organismsDiffer>
    <experiments>3</experiments>
</comment>
<comment type="interaction">
    <interactant intactId="EBI-726224">
        <id>Q86YP4</id>
    </interactant>
    <interactant intactId="EBI-12516603">
        <id>Q8WWY6</id>
        <label>MBD3L1</label>
    </interactant>
    <organismsDiffer>false</organismsDiffer>
    <experiments>5</experiments>
</comment>
<comment type="interaction">
    <interactant intactId="EBI-10261080">
        <id>Q86YP4-3</id>
    </interactant>
    <interactant intactId="EBI-10171697">
        <id>Q6A162</id>
        <label>KRT40</label>
    </interactant>
    <organismsDiffer>false</organismsDiffer>
    <experiments>3</experiments>
</comment>
<comment type="subcellular location">
    <subcellularLocation>
        <location evidence="5 6">Nucleus speckle</location>
    </subcellularLocation>
    <subcellularLocation>
        <location evidence="10 11 12">Nucleus</location>
    </subcellularLocation>
    <subcellularLocation>
        <location evidence="10">Chromosome</location>
    </subcellularLocation>
    <text evidence="6 10">Speckled nuclear localization requires both CR1 and CR2 regions (PubMed:16415179). Localizes to sites of DNA damage in a manner partially dependent on ZMYND8 (PubMed:27732854).</text>
</comment>
<comment type="alternative products">
    <event type="alternative splicing"/>
    <isoform>
        <id>Q86YP4-1</id>
        <name>1</name>
        <sequence type="displayed"/>
    </isoform>
    <isoform>
        <id>Q86YP4-2</id>
        <name>2</name>
        <sequence type="described" ref="VSP_010929"/>
    </isoform>
    <isoform>
        <id>Q86YP4-3</id>
        <name>3</name>
        <sequence type="described" ref="VSP_053410"/>
    </isoform>
</comment>
<comment type="tissue specificity">
    <text evidence="5">Ubiquitous, both in fetal and adult tissues.</text>
</comment>
<comment type="domain">
    <text evidence="6">Both CR1 and CR2 regions are required for speckled nuclear localization.</text>
</comment>
<comment type="sequence caution" evidence="16">
    <conflict type="erroneous initiation">
        <sequence resource="EMBL-CDS" id="AAH11684"/>
    </conflict>
    <text>Truncated N-terminus.</text>
</comment>
<comment type="sequence caution" evidence="16">
    <conflict type="erroneous initiation">
        <sequence resource="EMBL-CDS" id="BAA90939"/>
    </conflict>
    <text>Truncated N-terminus.</text>
</comment>
<proteinExistence type="evidence at protein level"/>
<reference key="1">
    <citation type="journal article" date="2002" name="J. Biol. Chem.">
        <title>Two highly related p66 proteins comprise a new family of potent transcriptional repressors interacting with MBD2 and MBD3.</title>
        <authorList>
            <person name="Brackertz M."/>
            <person name="Boeke J."/>
            <person name="Zhang R."/>
            <person name="Renkawitz R."/>
        </authorList>
    </citation>
    <scope>NUCLEOTIDE SEQUENCE [MRNA] (ISOFORM 1)</scope>
    <scope>FUNCTION</scope>
    <scope>INTERACTION WITH MBD2 AND MBD3</scope>
    <scope>SUBCELLULAR LOCATION</scope>
    <scope>TISSUE SPECIFICITY</scope>
    <scope>DOMAIN CR1</scope>
</reference>
<reference key="2">
    <citation type="journal article" date="2004" name="Nature">
        <title>The DNA sequence and biology of human chromosome 19.</title>
        <authorList>
            <person name="Grimwood J."/>
            <person name="Gordon L.A."/>
            <person name="Olsen A.S."/>
            <person name="Terry A."/>
            <person name="Schmutz J."/>
            <person name="Lamerdin J.E."/>
            <person name="Hellsten U."/>
            <person name="Goodstein D."/>
            <person name="Couronne O."/>
            <person name="Tran-Gyamfi M."/>
            <person name="Aerts A."/>
            <person name="Altherr M."/>
            <person name="Ashworth L."/>
            <person name="Bajorek E."/>
            <person name="Black S."/>
            <person name="Branscomb E."/>
            <person name="Caenepeel S."/>
            <person name="Carrano A.V."/>
            <person name="Caoile C."/>
            <person name="Chan Y.M."/>
            <person name="Christensen M."/>
            <person name="Cleland C.A."/>
            <person name="Copeland A."/>
            <person name="Dalin E."/>
            <person name="Dehal P."/>
            <person name="Denys M."/>
            <person name="Detter J.C."/>
            <person name="Escobar J."/>
            <person name="Flowers D."/>
            <person name="Fotopulos D."/>
            <person name="Garcia C."/>
            <person name="Georgescu A.M."/>
            <person name="Glavina T."/>
            <person name="Gomez M."/>
            <person name="Gonzales E."/>
            <person name="Groza M."/>
            <person name="Hammon N."/>
            <person name="Hawkins T."/>
            <person name="Haydu L."/>
            <person name="Ho I."/>
            <person name="Huang W."/>
            <person name="Israni S."/>
            <person name="Jett J."/>
            <person name="Kadner K."/>
            <person name="Kimball H."/>
            <person name="Kobayashi A."/>
            <person name="Larionov V."/>
            <person name="Leem S.-H."/>
            <person name="Lopez F."/>
            <person name="Lou Y."/>
            <person name="Lowry S."/>
            <person name="Malfatti S."/>
            <person name="Martinez D."/>
            <person name="McCready P.M."/>
            <person name="Medina C."/>
            <person name="Morgan J."/>
            <person name="Nelson K."/>
            <person name="Nolan M."/>
            <person name="Ovcharenko I."/>
            <person name="Pitluck S."/>
            <person name="Pollard M."/>
            <person name="Popkie A.P."/>
            <person name="Predki P."/>
            <person name="Quan G."/>
            <person name="Ramirez L."/>
            <person name="Rash S."/>
            <person name="Retterer J."/>
            <person name="Rodriguez A."/>
            <person name="Rogers S."/>
            <person name="Salamov A."/>
            <person name="Salazar A."/>
            <person name="She X."/>
            <person name="Smith D."/>
            <person name="Slezak T."/>
            <person name="Solovyev V."/>
            <person name="Thayer N."/>
            <person name="Tice H."/>
            <person name="Tsai M."/>
            <person name="Ustaszewska A."/>
            <person name="Vo N."/>
            <person name="Wagner M."/>
            <person name="Wheeler J."/>
            <person name="Wu K."/>
            <person name="Xie G."/>
            <person name="Yang J."/>
            <person name="Dubchak I."/>
            <person name="Furey T.S."/>
            <person name="DeJong P."/>
            <person name="Dickson M."/>
            <person name="Gordon D."/>
            <person name="Eichler E.E."/>
            <person name="Pennacchio L.A."/>
            <person name="Richardson P."/>
            <person name="Stubbs L."/>
            <person name="Rokhsar D.S."/>
            <person name="Myers R.M."/>
            <person name="Rubin E.M."/>
            <person name="Lucas S.M."/>
        </authorList>
    </citation>
    <scope>NUCLEOTIDE SEQUENCE [LARGE SCALE GENOMIC DNA]</scope>
</reference>
<reference key="3">
    <citation type="submission" date="2005-07" db="EMBL/GenBank/DDBJ databases">
        <authorList>
            <person name="Mural R.J."/>
            <person name="Istrail S."/>
            <person name="Sutton G."/>
            <person name="Florea L."/>
            <person name="Halpern A.L."/>
            <person name="Mobarry C.M."/>
            <person name="Lippert R."/>
            <person name="Walenz B."/>
            <person name="Shatkay H."/>
            <person name="Dew I."/>
            <person name="Miller J.R."/>
            <person name="Flanigan M.J."/>
            <person name="Edwards N.J."/>
            <person name="Bolanos R."/>
            <person name="Fasulo D."/>
            <person name="Halldorsson B.V."/>
            <person name="Hannenhalli S."/>
            <person name="Turner R."/>
            <person name="Yooseph S."/>
            <person name="Lu F."/>
            <person name="Nusskern D.R."/>
            <person name="Shue B.C."/>
            <person name="Zheng X.H."/>
            <person name="Zhong F."/>
            <person name="Delcher A.L."/>
            <person name="Huson D.H."/>
            <person name="Kravitz S.A."/>
            <person name="Mouchard L."/>
            <person name="Reinert K."/>
            <person name="Remington K.A."/>
            <person name="Clark A.G."/>
            <person name="Waterman M.S."/>
            <person name="Eichler E.E."/>
            <person name="Adams M.D."/>
            <person name="Hunkapiller M.W."/>
            <person name="Myers E.W."/>
            <person name="Venter J.C."/>
        </authorList>
    </citation>
    <scope>NUCLEOTIDE SEQUENCE [LARGE SCALE GENOMIC DNA]</scope>
</reference>
<reference key="4">
    <citation type="journal article" date="2004" name="Genome Res.">
        <title>The status, quality, and expansion of the NIH full-length cDNA project: the Mammalian Gene Collection (MGC).</title>
        <authorList>
            <consortium name="The MGC Project Team"/>
        </authorList>
    </citation>
    <scope>NUCLEOTIDE SEQUENCE [LARGE SCALE MRNA] (ISOFORMS 1 AND 3)</scope>
    <source>
        <tissue>Ovary</tissue>
        <tissue>Skin</tissue>
    </source>
</reference>
<reference key="5">
    <citation type="journal article" date="2004" name="Nat. Genet.">
        <title>Complete sequencing and characterization of 21,243 full-length human cDNAs.</title>
        <authorList>
            <person name="Ota T."/>
            <person name="Suzuki Y."/>
            <person name="Nishikawa T."/>
            <person name="Otsuki T."/>
            <person name="Sugiyama T."/>
            <person name="Irie R."/>
            <person name="Wakamatsu A."/>
            <person name="Hayashi K."/>
            <person name="Sato H."/>
            <person name="Nagai K."/>
            <person name="Kimura K."/>
            <person name="Makita H."/>
            <person name="Sekine M."/>
            <person name="Obayashi M."/>
            <person name="Nishi T."/>
            <person name="Shibahara T."/>
            <person name="Tanaka T."/>
            <person name="Ishii S."/>
            <person name="Yamamoto J."/>
            <person name="Saito K."/>
            <person name="Kawai Y."/>
            <person name="Isono Y."/>
            <person name="Nakamura Y."/>
            <person name="Nagahari K."/>
            <person name="Murakami K."/>
            <person name="Yasuda T."/>
            <person name="Iwayanagi T."/>
            <person name="Wagatsuma M."/>
            <person name="Shiratori A."/>
            <person name="Sudo H."/>
            <person name="Hosoiri T."/>
            <person name="Kaku Y."/>
            <person name="Kodaira H."/>
            <person name="Kondo H."/>
            <person name="Sugawara M."/>
            <person name="Takahashi M."/>
            <person name="Kanda K."/>
            <person name="Yokoi T."/>
            <person name="Furuya T."/>
            <person name="Kikkawa E."/>
            <person name="Omura Y."/>
            <person name="Abe K."/>
            <person name="Kamihara K."/>
            <person name="Katsuta N."/>
            <person name="Sato K."/>
            <person name="Tanikawa M."/>
            <person name="Yamazaki M."/>
            <person name="Ninomiya K."/>
            <person name="Ishibashi T."/>
            <person name="Yamashita H."/>
            <person name="Murakawa K."/>
            <person name="Fujimori K."/>
            <person name="Tanai H."/>
            <person name="Kimata M."/>
            <person name="Watanabe M."/>
            <person name="Hiraoka S."/>
            <person name="Chiba Y."/>
            <person name="Ishida S."/>
            <person name="Ono Y."/>
            <person name="Takiguchi S."/>
            <person name="Watanabe S."/>
            <person name="Yosida M."/>
            <person name="Hotuta T."/>
            <person name="Kusano J."/>
            <person name="Kanehori K."/>
            <person name="Takahashi-Fujii A."/>
            <person name="Hara H."/>
            <person name="Tanase T.-O."/>
            <person name="Nomura Y."/>
            <person name="Togiya S."/>
            <person name="Komai F."/>
            <person name="Hara R."/>
            <person name="Takeuchi K."/>
            <person name="Arita M."/>
            <person name="Imose N."/>
            <person name="Musashino K."/>
            <person name="Yuuki H."/>
            <person name="Oshima A."/>
            <person name="Sasaki N."/>
            <person name="Aotsuka S."/>
            <person name="Yoshikawa Y."/>
            <person name="Matsunawa H."/>
            <person name="Ichihara T."/>
            <person name="Shiohata N."/>
            <person name="Sano S."/>
            <person name="Moriya S."/>
            <person name="Momiyama H."/>
            <person name="Satoh N."/>
            <person name="Takami S."/>
            <person name="Terashima Y."/>
            <person name="Suzuki O."/>
            <person name="Nakagawa S."/>
            <person name="Senoh A."/>
            <person name="Mizoguchi H."/>
            <person name="Goto Y."/>
            <person name="Shimizu F."/>
            <person name="Wakebe H."/>
            <person name="Hishigaki H."/>
            <person name="Watanabe T."/>
            <person name="Sugiyama A."/>
            <person name="Takemoto M."/>
            <person name="Kawakami B."/>
            <person name="Yamazaki M."/>
            <person name="Watanabe K."/>
            <person name="Kumagai A."/>
            <person name="Itakura S."/>
            <person name="Fukuzumi Y."/>
            <person name="Fujimori Y."/>
            <person name="Komiyama M."/>
            <person name="Tashiro H."/>
            <person name="Tanigami A."/>
            <person name="Fujiwara T."/>
            <person name="Ono T."/>
            <person name="Yamada K."/>
            <person name="Fujii Y."/>
            <person name="Ozaki K."/>
            <person name="Hirao M."/>
            <person name="Ohmori Y."/>
            <person name="Kawabata A."/>
            <person name="Hikiji T."/>
            <person name="Kobatake N."/>
            <person name="Inagaki H."/>
            <person name="Ikema Y."/>
            <person name="Okamoto S."/>
            <person name="Okitani R."/>
            <person name="Kawakami T."/>
            <person name="Noguchi S."/>
            <person name="Itoh T."/>
            <person name="Shigeta K."/>
            <person name="Senba T."/>
            <person name="Matsumura K."/>
            <person name="Nakajima Y."/>
            <person name="Mizuno T."/>
            <person name="Morinaga M."/>
            <person name="Sasaki M."/>
            <person name="Togashi T."/>
            <person name="Oyama M."/>
            <person name="Hata H."/>
            <person name="Watanabe M."/>
            <person name="Komatsu T."/>
            <person name="Mizushima-Sugano J."/>
            <person name="Satoh T."/>
            <person name="Shirai Y."/>
            <person name="Takahashi Y."/>
            <person name="Nakagawa K."/>
            <person name="Okumura K."/>
            <person name="Nagase T."/>
            <person name="Nomura N."/>
            <person name="Kikuchi H."/>
            <person name="Masuho Y."/>
            <person name="Yamashita R."/>
            <person name="Nakai K."/>
            <person name="Yada T."/>
            <person name="Nakamura Y."/>
            <person name="Ohara O."/>
            <person name="Isogai T."/>
            <person name="Sugano S."/>
        </authorList>
    </citation>
    <scope>NUCLEOTIDE SEQUENCE [LARGE SCALE MRNA] OF 417-633 (ISOFORM 1)</scope>
    <source>
        <tissue>Colon</tissue>
    </source>
</reference>
<reference key="6">
    <citation type="journal article" date="2007" name="BMC Genomics">
        <title>The full-ORF clone resource of the German cDNA consortium.</title>
        <authorList>
            <person name="Bechtel S."/>
            <person name="Rosenfelder H."/>
            <person name="Duda A."/>
            <person name="Schmidt C.P."/>
            <person name="Ernst U."/>
            <person name="Wellenreuther R."/>
            <person name="Mehrle A."/>
            <person name="Schuster C."/>
            <person name="Bahr A."/>
            <person name="Bloecker H."/>
            <person name="Heubner D."/>
            <person name="Hoerlein A."/>
            <person name="Michel G."/>
            <person name="Wedler H."/>
            <person name="Koehrer K."/>
            <person name="Ottenwaelder B."/>
            <person name="Poustka A."/>
            <person name="Wiemann S."/>
            <person name="Schupp I."/>
        </authorList>
    </citation>
    <scope>NUCLEOTIDE SEQUENCE [LARGE SCALE MRNA] OF 465-633 (ISOFORM 2)</scope>
    <source>
        <tissue>Brain</tissue>
    </source>
</reference>
<reference key="7">
    <citation type="journal article" date="2006" name="Cell">
        <title>Global, in vivo, and site-specific phosphorylation dynamics in signaling networks.</title>
        <authorList>
            <person name="Olsen J.V."/>
            <person name="Blagoev B."/>
            <person name="Gnad F."/>
            <person name="Macek B."/>
            <person name="Kumar C."/>
            <person name="Mortensen P."/>
            <person name="Mann M."/>
        </authorList>
    </citation>
    <scope>IDENTIFICATION BY MASS SPECTROMETRY [LARGE SCALE ANALYSIS]</scope>
    <source>
        <tissue>Cervix carcinoma</tissue>
    </source>
</reference>
<reference key="8">
    <citation type="journal article" date="2006" name="Nat. Biotechnol.">
        <title>A probability-based approach for high-throughput protein phosphorylation analysis and site localization.</title>
        <authorList>
            <person name="Beausoleil S.A."/>
            <person name="Villen J."/>
            <person name="Gerber S.A."/>
            <person name="Rush J."/>
            <person name="Gygi S.P."/>
        </authorList>
    </citation>
    <scope>PHOSPHORYLATION [LARGE SCALE ANALYSIS] AT SER-100; SER-107 AND SER-114</scope>
    <scope>IDENTIFICATION BY MASS SPECTROMETRY [LARGE SCALE ANALYSIS]</scope>
    <source>
        <tissue>Cervix carcinoma</tissue>
    </source>
</reference>
<reference key="9">
    <citation type="journal article" date="2006" name="Nucleic Acids Res.">
        <title>p66alpha and p66beta of the Mi-2/NuRD complex mediate MBD2 and histone interaction.</title>
        <authorList>
            <person name="Brackertz M."/>
            <person name="Gong Z."/>
            <person name="Leers J."/>
            <person name="Renkawitz R."/>
        </authorList>
    </citation>
    <scope>FUNCTION</scope>
    <scope>INTERACTION WITH MBD2 AND HISTONE TAILS</scope>
    <scope>SUBCELLULAR LOCATION</scope>
    <scope>MUTAGENESIS OF LYS-149</scope>
    <scope>DOMAINS CR1 AND CR2</scope>
</reference>
<reference key="10">
    <citation type="journal article" date="2006" name="Mol. Cell. Biol.">
        <title>MBD2/NuRD and MBD3/NuRD, two distinct complexes with different biochemical and functional properties.</title>
        <authorList>
            <person name="Le Guezennec X."/>
            <person name="Vermeulen M."/>
            <person name="Brinkman A.B."/>
            <person name="Hoeijmakers W.A."/>
            <person name="Cohen A."/>
            <person name="Lasonder E."/>
            <person name="Stunnenberg H.G."/>
        </authorList>
    </citation>
    <scope>FUNCTION</scope>
    <scope>IDENTIFICATION IN THE NURD COMPLEX</scope>
    <scope>IDENTIFICATION BY MASS SPECTROMETRY</scope>
</reference>
<reference key="11">
    <citation type="journal article" date="2008" name="J. Proteome Res.">
        <title>Combining protein-based IMAC, peptide-based IMAC, and MudPIT for efficient phosphoproteomic analysis.</title>
        <authorList>
            <person name="Cantin G.T."/>
            <person name="Yi W."/>
            <person name="Lu B."/>
            <person name="Park S.K."/>
            <person name="Xu T."/>
            <person name="Lee J.-D."/>
            <person name="Yates J.R. III"/>
        </authorList>
    </citation>
    <scope>PHOSPHORYLATION [LARGE SCALE ANALYSIS] AT THR-49; SER-100 AND SER-107</scope>
    <scope>IDENTIFICATION BY MASS SPECTROMETRY [LARGE SCALE ANALYSIS]</scope>
    <source>
        <tissue>Cervix carcinoma</tissue>
    </source>
</reference>
<reference key="12">
    <citation type="journal article" date="2008" name="Mol. Cell">
        <title>Kinase-selective enrichment enables quantitative phosphoproteomics of the kinome across the cell cycle.</title>
        <authorList>
            <person name="Daub H."/>
            <person name="Olsen J.V."/>
            <person name="Bairlein M."/>
            <person name="Gnad F."/>
            <person name="Oppermann F.S."/>
            <person name="Korner R."/>
            <person name="Greff Z."/>
            <person name="Keri G."/>
            <person name="Stemmann O."/>
            <person name="Mann M."/>
        </authorList>
    </citation>
    <scope>IDENTIFICATION BY MASS SPECTROMETRY [LARGE SCALE ANALYSIS]</scope>
    <source>
        <tissue>Cervix carcinoma</tissue>
    </source>
</reference>
<reference key="13">
    <citation type="journal article" date="2008" name="Proc. Natl. Acad. Sci. U.S.A.">
        <title>A quantitative atlas of mitotic phosphorylation.</title>
        <authorList>
            <person name="Dephoure N."/>
            <person name="Zhou C."/>
            <person name="Villen J."/>
            <person name="Beausoleil S.A."/>
            <person name="Bakalarski C.E."/>
            <person name="Elledge S.J."/>
            <person name="Gygi S.P."/>
        </authorList>
    </citation>
    <scope>PHOSPHORYLATION [LARGE SCALE ANALYSIS] AT THR-49; SER-100; SER-107; SER-114; SER-546; SER-548 AND SER-598</scope>
    <scope>IDENTIFICATION BY MASS SPECTROMETRY [LARGE SCALE ANALYSIS]</scope>
    <source>
        <tissue>Cervix carcinoma</tissue>
    </source>
</reference>
<reference key="14">
    <citation type="journal article" date="2009" name="Anal. Chem.">
        <title>Lys-N and trypsin cover complementary parts of the phosphoproteome in a refined SCX-based approach.</title>
        <authorList>
            <person name="Gauci S."/>
            <person name="Helbig A.O."/>
            <person name="Slijper M."/>
            <person name="Krijgsveld J."/>
            <person name="Heck A.J."/>
            <person name="Mohammed S."/>
        </authorList>
    </citation>
    <scope>IDENTIFICATION BY MASS SPECTROMETRY [LARGE SCALE ANALYSIS]</scope>
</reference>
<reference key="15">
    <citation type="journal article" date="2009" name="Sci. Signal.">
        <title>Quantitative phosphoproteomic analysis of T cell receptor signaling reveals system-wide modulation of protein-protein interactions.</title>
        <authorList>
            <person name="Mayya V."/>
            <person name="Lundgren D.H."/>
            <person name="Hwang S.-I."/>
            <person name="Rezaul K."/>
            <person name="Wu L."/>
            <person name="Eng J.K."/>
            <person name="Rodionov V."/>
            <person name="Han D.K."/>
        </authorList>
    </citation>
    <scope>PHOSPHORYLATION [LARGE SCALE ANALYSIS] AT THR-49; SER-100; SER-107; SER-114; THR-189 AND SER-340</scope>
    <scope>IDENTIFICATION BY MASS SPECTROMETRY [LARGE SCALE ANALYSIS]</scope>
    <source>
        <tissue>Leukemic T-cell</tissue>
    </source>
</reference>
<reference key="16">
    <citation type="journal article" date="2010" name="Sci. Signal.">
        <title>Quantitative phosphoproteomics reveals widespread full phosphorylation site occupancy during mitosis.</title>
        <authorList>
            <person name="Olsen J.V."/>
            <person name="Vermeulen M."/>
            <person name="Santamaria A."/>
            <person name="Kumar C."/>
            <person name="Miller M.L."/>
            <person name="Jensen L.J."/>
            <person name="Gnad F."/>
            <person name="Cox J."/>
            <person name="Jensen T.S."/>
            <person name="Nigg E.A."/>
            <person name="Brunak S."/>
            <person name="Mann M."/>
        </authorList>
    </citation>
    <scope>PHOSPHORYLATION [LARGE SCALE ANALYSIS] AT THR-49; SER-100; SER-107; SER-546 AND SER-548</scope>
    <scope>IDENTIFICATION BY MASS SPECTROMETRY [LARGE SCALE ANALYSIS]</scope>
    <source>
        <tissue>Cervix carcinoma</tissue>
    </source>
</reference>
<reference key="17">
    <citation type="journal article" date="2011" name="BMC Syst. Biol.">
        <title>Initial characterization of the human central proteome.</title>
        <authorList>
            <person name="Burkard T.R."/>
            <person name="Planyavsky M."/>
            <person name="Kaupe I."/>
            <person name="Breitwieser F.P."/>
            <person name="Buerckstuemmer T."/>
            <person name="Bennett K.L."/>
            <person name="Superti-Furga G."/>
            <person name="Colinge J."/>
        </authorList>
    </citation>
    <scope>IDENTIFICATION BY MASS SPECTROMETRY [LARGE SCALE ANALYSIS]</scope>
</reference>
<reference key="18">
    <citation type="journal article" date="2011" name="Sci. Signal.">
        <title>System-wide temporal characterization of the proteome and phosphoproteome of human embryonic stem cell differentiation.</title>
        <authorList>
            <person name="Rigbolt K.T."/>
            <person name="Prokhorova T.A."/>
            <person name="Akimov V."/>
            <person name="Henningsen J."/>
            <person name="Johansen P.T."/>
            <person name="Kratchmarova I."/>
            <person name="Kassem M."/>
            <person name="Mann M."/>
            <person name="Olsen J.V."/>
            <person name="Blagoev B."/>
        </authorList>
    </citation>
    <scope>PHOSPHORYLATION [LARGE SCALE ANALYSIS] AT THR-49; SER-100; SER-107 AND SER-343</scope>
    <scope>IDENTIFICATION BY MASS SPECTROMETRY [LARGE SCALE ANALYSIS]</scope>
</reference>
<reference key="19">
    <citation type="journal article" date="2013" name="J. Proteome Res.">
        <title>Toward a comprehensive characterization of a human cancer cell phosphoproteome.</title>
        <authorList>
            <person name="Zhou H."/>
            <person name="Di Palma S."/>
            <person name="Preisinger C."/>
            <person name="Peng M."/>
            <person name="Polat A.N."/>
            <person name="Heck A.J."/>
            <person name="Mohammed S."/>
        </authorList>
    </citation>
    <scope>PHOSPHORYLATION [LARGE SCALE ANALYSIS] AT THR-20; THR-49; SER-100; SER-107; SER-114; SER-137; THR-189; SER-275; SER-340; SER-512; SER-546; SER-548; SER-556 AND SER-598</scope>
    <scope>IDENTIFICATION BY MASS SPECTROMETRY [LARGE SCALE ANALYSIS]</scope>
    <source>
        <tissue>Cervix carcinoma</tissue>
        <tissue>Erythroleukemia</tissue>
    </source>
</reference>
<reference key="20">
    <citation type="journal article" date="2014" name="J. Proteomics">
        <title>An enzyme assisted RP-RPLC approach for in-depth analysis of human liver phosphoproteome.</title>
        <authorList>
            <person name="Bian Y."/>
            <person name="Song C."/>
            <person name="Cheng K."/>
            <person name="Dong M."/>
            <person name="Wang F."/>
            <person name="Huang J."/>
            <person name="Sun D."/>
            <person name="Wang L."/>
            <person name="Ye M."/>
            <person name="Zou H."/>
        </authorList>
    </citation>
    <scope>PHOSPHORYLATION [LARGE SCALE ANALYSIS] AT THR-49; SER-100; SER-107 AND THR-189</scope>
    <scope>IDENTIFICATION BY MASS SPECTROMETRY [LARGE SCALE ANALYSIS]</scope>
    <source>
        <tissue>Liver</tissue>
    </source>
</reference>
<reference key="21">
    <citation type="journal article" date="2014" name="Mol. Cell. Proteomics">
        <title>Immunoaffinity enrichment and mass spectrometry analysis of protein methylation.</title>
        <authorList>
            <person name="Guo A."/>
            <person name="Gu H."/>
            <person name="Zhou J."/>
            <person name="Mulhern D."/>
            <person name="Wang Y."/>
            <person name="Lee K.A."/>
            <person name="Yang V."/>
            <person name="Aguiar M."/>
            <person name="Kornhauser J."/>
            <person name="Jia X."/>
            <person name="Ren J."/>
            <person name="Beausoleil S.A."/>
            <person name="Silva J.C."/>
            <person name="Vemulapalli V."/>
            <person name="Bedford M.T."/>
            <person name="Comb M.J."/>
        </authorList>
    </citation>
    <scope>METHYLATION [LARGE SCALE ANALYSIS] AT ARG-249; ARG-258; ARG-273; ARG-285 AND ARG-539</scope>
    <scope>IDENTIFICATION BY MASS SPECTROMETRY [LARGE SCALE ANALYSIS]</scope>
    <source>
        <tissue>Colon carcinoma</tissue>
    </source>
</reference>
<reference key="22">
    <citation type="journal article" date="2014" name="Nat. Struct. Mol. Biol.">
        <title>Uncovering global SUMOylation signaling networks in a site-specific manner.</title>
        <authorList>
            <person name="Hendriks I.A."/>
            <person name="D'Souza R.C."/>
            <person name="Yang B."/>
            <person name="Verlaan-de Vries M."/>
            <person name="Mann M."/>
            <person name="Vertegaal A.C."/>
        </authorList>
    </citation>
    <scope>SUMOYLATION [LARGE SCALE ANALYSIS] AT LYS-487 AND LYS-550</scope>
    <scope>IDENTIFICATION BY MASS SPECTROMETRY [LARGE SCALE ANALYSIS]</scope>
</reference>
<reference key="23">
    <citation type="journal article" date="2015" name="Cell Rep.">
        <title>SUMO-2 orchestrates chromatin modifiers in response to DNA damage.</title>
        <authorList>
            <person name="Hendriks I.A."/>
            <person name="Treffers L.W."/>
            <person name="Verlaan-de Vries M."/>
            <person name="Olsen J.V."/>
            <person name="Vertegaal A.C."/>
        </authorList>
    </citation>
    <scope>SUMOYLATION [LARGE SCALE ANALYSIS] AT LYS-487 AND LYS-550</scope>
    <scope>IDENTIFICATION BY MASS SPECTROMETRY [LARGE SCALE ANALYSIS]</scope>
</reference>
<reference key="24">
    <citation type="journal article" date="2015" name="Mol. Cell. Proteomics">
        <title>System-wide analysis of SUMOylation dynamics in response to replication stress reveals novel small ubiquitin-like modified target proteins and acceptor lysines relevant for genome stability.</title>
        <authorList>
            <person name="Xiao Z."/>
            <person name="Chang J.G."/>
            <person name="Hendriks I.A."/>
            <person name="Sigurdsson J.O."/>
            <person name="Olsen J.V."/>
            <person name="Vertegaal A.C."/>
        </authorList>
    </citation>
    <scope>SUMOYLATION [LARGE SCALE ANALYSIS] AT LYS-487</scope>
    <scope>IDENTIFICATION BY MASS SPECTROMETRY [LARGE SCALE ANALYSIS]</scope>
</reference>
<reference key="25">
    <citation type="journal article" date="2015" name="PLoS ONE">
        <title>Identification of Novel Proteins Co-Purifying with Cockayne Syndrome Group B (CSB) Reveals Potential Roles for CSB in RNA Metabolism and Chromatin Dynamics.</title>
        <authorList>
            <person name="Nicolai S."/>
            <person name="Filippi S."/>
            <person name="Caputo M."/>
            <person name="Cipak L."/>
            <person name="Gregan J."/>
            <person name="Ammerer G."/>
            <person name="Frontini M."/>
            <person name="Willems D."/>
            <person name="Prantera G."/>
            <person name="Balajee A.S."/>
            <person name="Proietti-De-Santis L."/>
        </authorList>
    </citation>
    <scope>INTERACTION WITH ERCC6</scope>
</reference>
<reference key="26">
    <citation type="journal article" date="2016" name="Cell Rep.">
        <title>ZMYND8 Co-localizes with NuRD on Target Genes and Regulates Poly(ADP-Ribose)-Dependent Recruitment of GATAD2A/NuRD to Sites of DNA Damage.</title>
        <authorList>
            <person name="Spruijt C.G."/>
            <person name="Luijsterburg M.S."/>
            <person name="Menafra R."/>
            <person name="Lindeboom R.G."/>
            <person name="Jansen P.W."/>
            <person name="Edupuganti R.R."/>
            <person name="Baltissen M.P."/>
            <person name="Wiegant W.W."/>
            <person name="Voelker-Albert M.C."/>
            <person name="Matarese F."/>
            <person name="Mensinga A."/>
            <person name="Poser I."/>
            <person name="Vos H.R."/>
            <person name="Stunnenberg H.G."/>
            <person name="van Attikum H."/>
            <person name="Vermeulen M."/>
        </authorList>
    </citation>
    <scope>SUBUNIT</scope>
    <scope>INTERACTION WITH ZMYND8; MBD2 AND MBD3</scope>
    <scope>IDENTIFICATION IN THE NURD COMPLEX</scope>
    <scope>IDENTIFICATION BY MASS SPECTROMETRY</scope>
    <scope>SUBCELLULAR LOCATION</scope>
</reference>
<reference key="27">
    <citation type="journal article" date="2017" name="Nat. Struct. Mol. Biol.">
        <title>Site-specific mapping of the human SUMO proteome reveals co-modification with phosphorylation.</title>
        <authorList>
            <person name="Hendriks I.A."/>
            <person name="Lyon D."/>
            <person name="Young C."/>
            <person name="Jensen L.J."/>
            <person name="Vertegaal A.C."/>
            <person name="Nielsen M.L."/>
        </authorList>
    </citation>
    <scope>SUMOYLATION [LARGE SCALE ANALYSIS] AT LYS-93; LYS-178; LYS-204; LYS-233; LYS-464; LYS-487; LYS-550; LYS-585 AND LYS-605</scope>
    <scope>IDENTIFICATION BY MASS SPECTROMETRY [LARGE SCALE ANALYSIS]</scope>
</reference>
<reference key="28">
    <citation type="journal article" date="2017" name="Nucleic Acids Res.">
        <title>CHD3 and CHD4 form distinct NuRD complexes with different yet overlapping functionality.</title>
        <authorList>
            <person name="Hoffmeister H."/>
            <person name="Fuchs A."/>
            <person name="Erdel F."/>
            <person name="Pinz S."/>
            <person name="Groebner-Ferreira R."/>
            <person name="Bruckmann A."/>
            <person name="Deutzmann R."/>
            <person name="Schwartz U."/>
            <person name="Maldonado R."/>
            <person name="Huber C."/>
            <person name="Dendorfer A.S."/>
            <person name="Rippe K."/>
            <person name="Laengst G."/>
        </authorList>
    </citation>
    <scope>FUNCTION</scope>
    <scope>IDENTIFICATION IN THE NURD COMPLEX</scope>
    <scope>IDENTIFICATION BY MASS SPECTROMETRY</scope>
    <scope>SUBCELLULAR LOCATION</scope>
</reference>
<reference key="29">
    <citation type="journal article" date="2021" name="FEBS J.">
        <title>Cross-linking mass spectrometry reveals the structural topology of peripheral NuRD subunits relative to the core complex.</title>
        <authorList>
            <person name="Spruijt C.G."/>
            <person name="Graewe C."/>
            <person name="Kleinendorst S.C."/>
            <person name="Baltissen M.P.A."/>
            <person name="Vermeulen M."/>
        </authorList>
    </citation>
    <scope>IDENTIFICATION IN THE NURD COMPLEX</scope>
    <scope>INTERACTION WITH HDAC1; HDAC2; MTA2; MBD2; CHD4 AND CDK2AP1</scope>
    <scope>IDENTIFICATION BY MASS SPECTROMETRY</scope>
    <scope>SUBCELLULAR LOCATION</scope>
</reference>
<reference key="30">
    <citation type="journal article" date="2022" name="Genet. Med.">
        <title>De Novo ZMYND8 variants result in an autosomal dominant neurodevelopmental disorder with cardiac malformations.</title>
        <authorList>
            <person name="Dias K.R."/>
            <person name="Carlston C.M."/>
            <person name="Blok L.E.R."/>
            <person name="De Hayr L."/>
            <person name="Nawaz U."/>
            <person name="Evans C.A."/>
            <person name="Bayrak-Toydemir P."/>
            <person name="Htun S."/>
            <person name="Zhu Y."/>
            <person name="Ma A."/>
            <person name="Lynch S.A."/>
            <person name="Moorwood C."/>
            <person name="Stals K."/>
            <person name="Ellard S."/>
            <person name="Bainbridge M.N."/>
            <person name="Friedman J."/>
            <person name="Pappas J.G."/>
            <person name="Rabin R."/>
            <person name="Nowak C.B."/>
            <person name="Douglas J."/>
            <person name="Wilson T.E."/>
            <person name="Guillen Sacoto M.J."/>
            <person name="Mullegama S.V."/>
            <person name="Palculict T.B."/>
            <person name="Kirk E.P."/>
            <person name="Pinner J.R."/>
            <person name="Edwards M."/>
            <person name="Montanari F."/>
            <person name="Graziano C."/>
            <person name="Pippucci T."/>
            <person name="Dingmann B."/>
            <person name="Glass I."/>
            <person name="Mefford H.C."/>
            <person name="Shimoji T."/>
            <person name="Suzuki T."/>
            <person name="Yamakawa K."/>
            <person name="Streff H."/>
            <person name="Schaaf C.P."/>
            <person name="Slavotinek A.M."/>
            <person name="Voineagu I."/>
            <person name="Carey J.C."/>
            <person name="Buckley M.F."/>
            <person name="Schenck A."/>
            <person name="Harvey R.J."/>
            <person name="Roscioli T."/>
        </authorList>
    </citation>
    <scope>INTERACTION WITH ZMYND8</scope>
</reference>
<reference key="31">
    <citation type="journal article" date="2011" name="Proc. Natl. Acad. Sci. U.S.A.">
        <title>p66Alpha-MBD2 coiled-coil interaction and recruitment of Mi-2 are critical for globin gene silencing by the MBD2-NuRD complex.</title>
        <authorList>
            <person name="Gnanapragasam M.N."/>
            <person name="Scarsdale J.N."/>
            <person name="Amaya M.L."/>
            <person name="Webb H.D."/>
            <person name="Desai M.A."/>
            <person name="Walavalkar N.M."/>
            <person name="Wang S.Z."/>
            <person name="Zu Zhu S."/>
            <person name="Ginder G.D."/>
            <person name="Williams D.C. Jr."/>
        </authorList>
    </citation>
    <scope>STRUCTURE BY NMR OF 137-178 IN COMPLEX WITH MBD2</scope>
    <scope>SUBUNIT</scope>
    <scope>INTERACTION WITH MBD2</scope>
</reference>
<sequence>MTEEACRTRSQKRALERDPTEDDVESKKIKMERGLLASDLNTDGDMRVTPEPGAGPTQGLLRATEATAMAMGRGEGLVGDGPVDMRTSHSDMKSERRPPSPDVIVLSDNEQPSSPRVNGLTTVALKETSTEALMKSSPEERERMIKQLKEELRLEEAKLVLLKKLRQSQIQKEATAQKPTGSVGSTVTTPPPLVRGTQNIPAGKPSLQTSSARMPGSVIPPPLVRGGQQASSKLGPQASSQVVMPPLVRGAQQIHSIRQHSSTGPPPLLLAPRASVPSVQIQGQRIIQQGLIRVANVPNTSLLVNIPQPTPASLKGTTATSAQANSTPTSVASVVTSAESPASRQAAAKLALRKQLEKTLLEIPPPKPPAPEMNFLPSAANNEFIYLVGLEEVVQNLLETQGRMSAATVLSREPYMCAQCKTDFTCRWREEKSGAIMCENCMTTNQKKALKVEHTSRLKAAFVKALQQEQEIEQRLLQQGTAPAQAKAEPTAAPHPVLKQVIKPRRKLAFRSGEARDWSNGAVLQASSQLSRGSATTPRGVLHTFSPSPKLQNSASATALVSRTGRHSERTVSAGKGSATSNWKKTPLSTGGTLAFVSPSLAVHKSSSAVDRQREYLLDMIPPRSIPQSATWK</sequence>
<keyword id="KW-0002">3D-structure</keyword>
<keyword id="KW-0025">Alternative splicing</keyword>
<keyword id="KW-0158">Chromosome</keyword>
<keyword id="KW-0175">Coiled coil</keyword>
<keyword id="KW-1017">Isopeptide bond</keyword>
<keyword id="KW-0479">Metal-binding</keyword>
<keyword id="KW-0488">Methylation</keyword>
<keyword id="KW-0539">Nucleus</keyword>
<keyword id="KW-0597">Phosphoprotein</keyword>
<keyword id="KW-1267">Proteomics identification</keyword>
<keyword id="KW-1185">Reference proteome</keyword>
<keyword id="KW-0678">Repressor</keyword>
<keyword id="KW-0804">Transcription</keyword>
<keyword id="KW-0805">Transcription regulation</keyword>
<keyword id="KW-0832">Ubl conjugation</keyword>
<keyword id="KW-0862">Zinc</keyword>
<keyword id="KW-0863">Zinc-finger</keyword>
<accession>Q86YP4</accession>
<accession>B5MC40</accession>
<accession>Q7L3J2</accession>
<accession>Q96F28</accession>
<accession>Q9NPU2</accession>
<accession>Q9NXS1</accession>